<accession>Q03132</accession>
<accession>Q54096</accession>
<comment type="function">
    <text evidence="10 11 13 14 17 21">Involved in the biosynthesis of antibiotic erythromycin via the biosynthesis of its aglycone precursor, 6-deoxyerythronolide B (6-dEB).</text>
</comment>
<comment type="catalytic activity">
    <reaction evidence="13">
        <text>6 (S)-methylmalonyl-CoA + propanoyl-CoA + 6 NADPH + 12 H(+) = 6-deoxyerythronolide B + 6 CO2 + 6 NADP(+) + 7 CoA + H2O</text>
        <dbReference type="Rhea" id="RHEA:23068"/>
        <dbReference type="ChEBI" id="CHEBI:15377"/>
        <dbReference type="ChEBI" id="CHEBI:15378"/>
        <dbReference type="ChEBI" id="CHEBI:16089"/>
        <dbReference type="ChEBI" id="CHEBI:16526"/>
        <dbReference type="ChEBI" id="CHEBI:57287"/>
        <dbReference type="ChEBI" id="CHEBI:57327"/>
        <dbReference type="ChEBI" id="CHEBI:57392"/>
        <dbReference type="ChEBI" id="CHEBI:57783"/>
        <dbReference type="ChEBI" id="CHEBI:58349"/>
        <dbReference type="EC" id="2.3.1.94"/>
    </reaction>
</comment>
<comment type="cofactor">
    <cofactor evidence="19">
        <name>pantetheine 4'-phosphate</name>
        <dbReference type="ChEBI" id="CHEBI:47942"/>
    </cofactor>
    <text evidence="16">Binds 2 phosphopantetheines covalently.</text>
</comment>
<comment type="pathway">
    <text evidence="17 23">Antibiotic biosynthesis; erythromycin biosynthesis.</text>
</comment>
<comment type="subunit">
    <text evidence="8 10 11 17 18 22">Homodimer (PubMed:12954331, PubMed:17719492, PubMed:18952099). Erythronolide synthase is composed of EryAI, EryAII and EryAIII multimodular (2 modules) polypeptides each coding for a functional synthase subunit which participates in 2 of the six FAS-like elongation steps required for formation of the polyketide. Module 1, 2, 3, 4, 5, and 6 participating in biosynthesis steps 1, 2, 3, 4, 5, and 6, respectively.</text>
</comment>
<comment type="disruption phenotype">
    <text evidence="14">Cells lacking this gene are unable to produce 6-deoxyerythronolide (6-dEB), however a tetraketide lactone shunt is produced.</text>
</comment>
<comment type="miscellaneous">
    <text evidence="17 24">Type I modular polyketide synthases (PKSs) catalyze the step-wise condensation of simple carboxylic acid derivatives. Organizationally, type I PKSs are arranged into modules, wherein each module is comprised of a set of catalytic activities that is responsible for a single elongation of the polyketide chain and the appropriate reductive processing of the beta-keto functionality. A minimal elongation module contains an acyl transferase (AT) domain, an acyl-carrier protein (ACP) domain, and a ketosynthase (KS) domain. The AT domain is responsible for loading the methylmalonyl-CoA extender unit onto the phosphopantetheinylated ACP domain. Subsequently, the KS domain decarboxylates and then condenses the ACP-bound extender unit with the growing polyketide chain obtained from the preceding module to yield an ACP-bound beta-ketoacyl intermediate. In addition to the three core domains, each elongation module may contain up to three additional domains: a ketoreductase (KR), dehydratase (DH), and an enoyl reductase (ER) that are responsible for the reductive processing of the beta-keto functionality prior to the next extension step. The presence of a KR domain alone gives rise to a beta-hydroxyl functionality, the presence of both a KR and a DH domain generates an alkene, while the combination of KR, DH, and ER results in complete reduction to the alkane. Finally, a thioesterase (TE) domain, typically found at the terminus of the last elongation module, catalyzes the termination of polyketide biosynthesis. The activity of this domain results in cleavage of the acyl chain from the adjacent ACP and formation of the macrocyclic ring.</text>
</comment>
<comment type="miscellaneous">
    <text evidence="14">C2-type beta-ketoacyl reductase 1 is unable to bind NADP and seems to act as a racemase.</text>
</comment>
<keyword id="KW-0002">3D-structure</keyword>
<keyword id="KW-0012">Acyltransferase</keyword>
<keyword id="KW-0045">Antibiotic biosynthesis</keyword>
<keyword id="KW-0903">Direct protein sequencing</keyword>
<keyword id="KW-0511">Multifunctional enzyme</keyword>
<keyword id="KW-0521">NADP</keyword>
<keyword id="KW-0596">Phosphopantetheine</keyword>
<keyword id="KW-0597">Phosphoprotein</keyword>
<keyword id="KW-0677">Repeat</keyword>
<keyword id="KW-0808">Transferase</keyword>
<gene>
    <name evidence="15" type="primary">eryA</name>
</gene>
<reference key="1">
    <citation type="journal article" date="1991" name="Science">
        <title>Modular organization of genes required for complex polyketide biosynthesis.</title>
        <authorList>
            <person name="Donadio S."/>
            <person name="Staver M.J."/>
            <person name="McAlpine J.B."/>
            <person name="Swanson S.J."/>
            <person name="Katz L."/>
        </authorList>
    </citation>
    <scope>NUCLEOTIDE SEQUENCE [GENOMIC DNA]</scope>
    <scope>SUBUNIT</scope>
</reference>
<reference key="2">
    <citation type="journal article" date="1992" name="Eur. J. Biochem.">
        <title>6-deoxyerythronolide-B synthase 2 from Saccharopolyspora erythraea. Cloning of the structural gene, sequence analysis and inferred domain structure of the multifunctional enzyme.</title>
        <authorList>
            <person name="Bevitt D.J."/>
            <person name="Cortes J."/>
            <person name="Haydock S.F."/>
            <person name="Leadlay P.F."/>
        </authorList>
    </citation>
    <scope>NUCLEOTIDE SEQUENCE [GENOMIC DNA]</scope>
    <scope>SUBUNIT</scope>
    <source>
        <strain>ATCC 11635 / DSM 40517 / IFO 13426 / JCM 4026 / NCIB 8594</strain>
    </source>
</reference>
<reference key="3">
    <citation type="journal article" date="1992" name="FEBS Lett.">
        <title>Identification of DEBS 1, DEBS 2 and DEBS 3, the multienzyme polypeptides of the erythromycin-producing polyketide synthase from Saccharopolyspora erythraea.</title>
        <authorList>
            <person name="Caffrey P."/>
            <person name="Bevitt D.J."/>
            <person name="Staunton J."/>
            <person name="Leadlay P.F."/>
        </authorList>
    </citation>
    <scope>PROTEIN SEQUENCE OF 2-12</scope>
    <source>
        <strain>CA340</strain>
    </source>
</reference>
<reference key="4">
    <citation type="journal article" date="2007" name="Annu. Rev. Biochem.">
        <title>Structure and mechanism of the 6-deoxyerythronolide B synthase.</title>
        <authorList>
            <person name="Khosla C."/>
            <person name="Tang Y."/>
            <person name="Chen A.Y."/>
            <person name="Schnarr N.A."/>
            <person name="Cane D.E."/>
        </authorList>
    </citation>
    <scope>FUNCTION</scope>
    <scope>PATHWAY</scope>
    <scope>SUBUNIT</scope>
</reference>
<reference key="5">
    <citation type="journal article" date="2008" name="Chem. Biol.">
        <title>Prediction and manipulation of the stereochemistry of enoylreduction in modular polyketide synthases.</title>
        <authorList>
            <person name="Kwan D.H."/>
            <person name="Sun Y."/>
            <person name="Schulz F."/>
            <person name="Hong H."/>
            <person name="Popovic B."/>
            <person name="Sim-Stark J.C."/>
            <person name="Haydock S.F."/>
            <person name="Leadlay P.F."/>
        </authorList>
    </citation>
    <scope>FUNCTION</scope>
    <scope>MUTAGENESIS OF TYR-2874</scope>
    <scope>ACTIVE SITE</scope>
</reference>
<reference key="6">
    <citation type="journal article" date="2010" name="Chem. Biol.">
        <title>Complete biosynthesis of erythromycin A and designed analogs using E. coli as a heterologous host.</title>
        <authorList>
            <person name="Zhang H."/>
            <person name="Wang Y."/>
            <person name="Wu J."/>
            <person name="Skalina K."/>
            <person name="Pfeifer B.A."/>
        </authorList>
    </citation>
    <scope>FUNCTION</scope>
    <scope>CATALYTIC ACTIVITY</scope>
    <scope>PATHWAY</scope>
</reference>
<reference key="7">
    <citation type="journal article" date="2011" name="J. Mol. Biol.">
        <title>Structural and functional analysis of C2-type ketoreductases from modular polyketide synthases.</title>
        <authorList>
            <person name="Zheng J."/>
            <person name="Keatinge-Clay A.T."/>
        </authorList>
    </citation>
    <scope>FUNCTION</scope>
    <scope>MUTAGENESIS OF SER-1254 AND TYR-1267</scope>
    <scope>DISRUPTION PHENOTYPE</scope>
    <scope>REACTION MECHANISM</scope>
    <scope>ACTIVE SITE</scope>
</reference>
<reference key="8">
    <citation type="journal article" date="2003" name="Chem. Biol.">
        <title>The structure of docking domains in modular polyketide synthases.</title>
        <authorList>
            <person name="Broadhurst R.W."/>
            <person name="Nietlispach D."/>
            <person name="Wheatcroft M.P."/>
            <person name="Leadlay P.F."/>
            <person name="Weissman K.J."/>
        </authorList>
    </citation>
    <scope>STRUCTURE BY NMR OF 3488-3547</scope>
    <scope>SUBUNIT</scope>
</reference>
<reference key="9">
    <citation type="journal article" date="2007" name="Chem. Biol.">
        <title>Structural and mechanistic analysis of protein interactions in module 3 of the 6-deoxyerythronolide B synthase.</title>
        <authorList>
            <person name="Tang Y."/>
            <person name="Chen A.Y."/>
            <person name="Kim C.Y."/>
            <person name="Cane D.E."/>
            <person name="Khosla C."/>
        </authorList>
    </citation>
    <scope>X-RAY CRYSTALLOGRAPHY (2.59 ANGSTROMS) OF 27-922 IN COMPLEX WITH SUBSTRATE ANALOG</scope>
    <scope>FUNCTION</scope>
    <scope>SUBSTRATE SPECIFICITY</scope>
    <scope>ACTIVE SITE</scope>
    <scope>COFACTOR</scope>
    <scope>SUBUNIT</scope>
</reference>
<reference key="10">
    <citation type="journal article" date="2008" name="J. Mol. Biol.">
        <title>Crystal structure of the erythromycin polyketide synthase dehydratase.</title>
        <authorList>
            <person name="Keatinge-Clay A."/>
        </authorList>
    </citation>
    <scope>X-RAY CRYSTALLOGRAPHY (1.85 ANGSTROMS) OF 2362-2653</scope>
    <scope>FUNCTION</scope>
    <scope>MUTAGENESIS OF ARG-2640</scope>
    <scope>SUBUNIT</scope>
    <scope>ACTIVE SITE</scope>
</reference>
<evidence type="ECO:0000250" key="1">
    <source>
        <dbReference type="UniProtKB" id="Q03131"/>
    </source>
</evidence>
<evidence type="ECO:0000250" key="2">
    <source>
        <dbReference type="UniProtKB" id="Q9ZGI4"/>
    </source>
</evidence>
<evidence type="ECO:0000255" key="3">
    <source>
        <dbReference type="PROSITE-ProRule" id="PRU00258"/>
    </source>
</evidence>
<evidence type="ECO:0000255" key="4">
    <source>
        <dbReference type="PROSITE-ProRule" id="PRU01348"/>
    </source>
</evidence>
<evidence type="ECO:0000255" key="5">
    <source>
        <dbReference type="PROSITE-ProRule" id="PRU01363"/>
    </source>
</evidence>
<evidence type="ECO:0000255" key="6">
    <source>
        <dbReference type="PROSITE-ProRule" id="PRU10022"/>
    </source>
</evidence>
<evidence type="ECO:0000256" key="7">
    <source>
        <dbReference type="SAM" id="MobiDB-lite"/>
    </source>
</evidence>
<evidence type="ECO:0000269" key="8">
    <source>
    </source>
</evidence>
<evidence type="ECO:0000269" key="9">
    <source>
    </source>
</evidence>
<evidence type="ECO:0000269" key="10">
    <source>
    </source>
</evidence>
<evidence type="ECO:0000269" key="11">
    <source>
    </source>
</evidence>
<evidence type="ECO:0000269" key="12">
    <source>
    </source>
</evidence>
<evidence type="ECO:0000269" key="13">
    <source>
    </source>
</evidence>
<evidence type="ECO:0000269" key="14">
    <source>
    </source>
</evidence>
<evidence type="ECO:0000303" key="15">
    <source>
    </source>
</evidence>
<evidence type="ECO:0000305" key="16"/>
<evidence type="ECO:0000305" key="17">
    <source>
    </source>
</evidence>
<evidence type="ECO:0000305" key="18">
    <source>
    </source>
</evidence>
<evidence type="ECO:0000305" key="19">
    <source>
    </source>
</evidence>
<evidence type="ECO:0000305" key="20">
    <source>
    </source>
</evidence>
<evidence type="ECO:0000305" key="21">
    <source>
    </source>
</evidence>
<evidence type="ECO:0000305" key="22">
    <source>
    </source>
</evidence>
<evidence type="ECO:0000305" key="23">
    <source>
    </source>
</evidence>
<evidence type="ECO:0000305" key="24">
    <source>
    </source>
</evidence>
<evidence type="ECO:0007829" key="25">
    <source>
        <dbReference type="PDB" id="1PZQ"/>
    </source>
</evidence>
<evidence type="ECO:0007829" key="26">
    <source>
        <dbReference type="PDB" id="1PZR"/>
    </source>
</evidence>
<evidence type="ECO:0007829" key="27">
    <source>
        <dbReference type="PDB" id="2QO3"/>
    </source>
</evidence>
<evidence type="ECO:0007829" key="28">
    <source>
        <dbReference type="PDB" id="3EL6"/>
    </source>
</evidence>
<evidence type="ECO:0007829" key="29">
    <source>
        <dbReference type="PDB" id="6C9U"/>
    </source>
</evidence>
<evidence type="ECO:0007829" key="30">
    <source>
        <dbReference type="PDB" id="7M7E"/>
    </source>
</evidence>
<evidence type="ECO:0007829" key="31">
    <source>
        <dbReference type="PDB" id="8TPW"/>
    </source>
</evidence>
<evidence type="ECO:0007829" key="32">
    <source>
        <dbReference type="PDB" id="8TPX"/>
    </source>
</evidence>
<sequence length="3567" mass="374421">MTDSEKVAEYLRRATLDLRAARQRIRELESDPIAIVSMACRLPGGVNTPQRLWELLREGGETLSGFPTDRGWDLARLHHPDPDNPGTSYVDKGGFLDDAAGFDAEFFGVSPREAAAMDPQQRLLLETSWELVENAGIDPHSLRGTATGVFLGVAKFGYGEDTAAAEDVEGYSVTGVAPAVASGRISYTMGLEGPSISVDTACSSSLVALHLAVESLRKGESSMAVVGGAAVMATPGVFVDFSRQRALAADGRSKAFGAGADGFGFSEGVTLVLLERLSEARRNGHEVLAVVRGSALNQDGASNGLSAPSGPAQRRVIRQALESCGLEPGDVDAVEAHGTGTALGDPIEANALLDTYGRDRDADRPLWLGSVKSNIGHTQAAAGVTGLLKVVLALRNGELPATLHVEEPTPHVDWSSGGVALLAGNQPWRRGERTRRARVSAFGISGTNAHVIVEEAPEREHRETTAHDGRPVPLVVSARTTAALRAQAAQIAELLERPDADLAGVGLGLATTRARHEHRAAVVASTREEAVRGLREIAAGAATADAVVEGVTEVDGRNVVFLFPGQGSQWAGMGAELLSSSPVFAGKIRACDESMAPMQDWKVSDVLRQAPGAPGLDRVDVVQPVLFAVMVSLAELWRSYGVEPAAVVGHSQGEIAAAHVAGALTLEDAAKLVVGRSRLMRSLSGEGGMAAVALGEAAVRERLRPWQDRLSVAAVNGPRSVVVSGEPGALRAFSEDCAAEGIRVRDIDVDYASHSPQIERVREELLETTGDIAPRPARVTFHSTVESRSMDGTELDARYWYRNLRETVRFADAVTRLAESGYDAFIEVSPHPVVVQAVEEAVEEADGAEDAVVVGSLHRDGGDLSAFLRSMATAHVSGVDIRWDVALPGAAPFALPTYPFQRKRYWLQPAAPAAASDELAYRVSWTPIEKPESGNLDGDWLVVTPLISPEWTEMLCEAINANGGRALRCEVDTSASRTEMAQAVAQAGTGFRGVLSLLSSDESACRPGVPAGAVGLLTLVQALGDAGVDAPVWCLTQGAVRTPADDDLARPAQTTAHGFAQVAGLELPGRWGGVVDLPESVDDAALRLLVAVLRGGGRAEDHLAVRDGRLHGRRVVRASLPQSGSRSWTPHGTVLVTGAASPVGDQLVRWLADRGAERLVLAGACPGDDLLAAVEEAGASAVVCAQDAAALREALGDEPVTALVHAGTLTNFGSISEVAPEEFAETIAAKTALLAVLDEVLGDRAVEREVYCSSVAGIWGGAGMAAYAAGSAYLDALAEHHRARGRSCTSVAWTPWALPGGAVDDGYLRERGLRSLSADRAMRTWERVLAAGPVSVAVADVDWPVLSEGFAATRPTALFAELAGRGGQAEAEPDSGPTGEPAQRLAGLSPDEQQENLLELVANAVAEVLGHESAAEINVRRAFSELGLDSLNAMALRKRLSASTGLRLPASLVFDHPTVTALAQHLRARLVGDADQAAVRVVGAADESEPIAIVGIGCRFPGGIGSPEQLWRVLAEGANLTTGFPADRGWDIGRLYHPDPDNPGTSYVDKGGFLTDAADFDPGFFGITPREALAMDPQQRLMLETAWEAVERAGIDPDALRGTDTGVFVGMNGQSYMQLLAGEAERVDGYQGLGNSASVLSGRIAYTFGWEGPALTVDTACSSSLVGIHLAMQALRRGECSLALAGGVTVMSDPYTFVDFSTQRGLASDGRCKAFSARADGFALSEGVAALVLEPLSRARANGHQVLAVLRGSAVNQDGASNGLAAPNGPSQERVIRQALAASGVPAADVDVVEAHGTGTELGDPIEAGALIATYGQDRDRPLRLGSVKTNIGHTQAAAGAAGVIKVVLAMRHGMLPRSLHADELSPHIDWESGAVEVLREEVPWPAGERPRRAGVSSFGVSGTNAHVIVEEAPAEQEAARTERGPLPFVLSGRSEAVVAAQARALAEHLRDTPELGLTDAAWTLATGRARFDVRAAVLGDDRAGVCAELDALAEGRPSADAVAPVTSAPRKPVLVFPGQGAQWVGMARDLLESSEVFAESMSRCAEALSPHTDWKLLDVVRGDGGPDPHERVDVLQPVLFSIMVSLAELWRAHGVTPAAVVGHSQGEIAAAHVAGALSLEAAAKVVALRSQVLRELDDQGGMVSVGASRDELETVLARWDGRVAVAAVNGPGTSVVAGPTAELDEFFAEAEAREMKPRRIAVRYASHSPEVARIEDRLAAELGTITAVRGSVPLHSTVTGEVIDTSAMDASYWYRNLRRPVLFEQAVRGLVEQGFDTFVEVSPHPVLLMAVEETAEHAGAEVTCVPTLRREQSGPHEFLRNLLRAHVHGVGADLRPAVAGGRPAELPTYPFEHQRFWPRPHRPADVSALGVRGAEHPLLLAAVDVPGHGGAVFTGRLSTDEQPWLAEHVVGGRTLVPGSVLVDLALAAGEDVGLPVLEELVLQRPLVLAGAGALLRMSVGAPDESGRRTIDVHAAEDVADLADAQWSQHATGTLAQGVAAGPRDTEQWPPEDAVRIPLDDHYDGLAEQGYEYGPSFQALRAAWRKDDSVYAEVSIAADEEGYAFHPVLLDAVAQTLSLGALGEPGGGKLPFAWNTVTLHASGATSVRVVATPAGADAMALRVTDPAGHLVATVDSLVVRSTGEKWEQPEPRGGEGELHALDWGRLAEPGSTGRVVAADASDLDAVLRSGEPEPDAVLVRYEPEGDDPRAAARHGVLWAAALVRRWLEQEELPGATLVIATSGAVTVSDDDSVPEPGAAAMWGVIRCAQAESPDRFVLLDTDAEPGMLPAVPDNPQLALRGDDVFVPRLSPLAPSALTLPAGTQRLVPGDGAIDSVAFEPAPDVEQPLRAGEVRVDVRATGVNFRDVLLALGMYPQKADMGTEAAGVVTAVGPDVDAFAPGDRVLGLFQGAFAPIAVTDHRLLARVPDGWSDADAAAVPIAYTTAHYALHDLAGLRAGQSVLIHAAAGGVGMAAVALARRAGAEVLATAGPAKHGTLRALGLDDEHIASSRETGFARKFRERTGGRGVDVVLNSLTGELLDESADLLAEDGVFVEMGKTDLRDAGDFRGRYAPFDLGEAGDDRLGEILREVVGLLGAGELDRLPVSAWELGSAPAALQHMSRGRHVGKLVLTQPAPVDPDGTVLITGGTGTLGRLLARHLVTEHGVRHLLLVSRRGADAPGSDELRAEIEDLGASAEIAACDTADRDALSALLDGLPRPLTGVVHAAGVLADGLVTSIDEPAVEQVLRAKVDAAWNLHELTANTGLSFFVLFSSAASVLAGPGQGVYAAANESLNALAALRRTRGLPAKALGWGLWAQASEMTSGLGDRIARTGVAALPTERALALFDSALRRGGEVVFPLSINRSALRRAEFVPEVLRGMVRAKLRAAGQAEAAGPNVVDRLAGRSESDQVAGLAELVRSHAAAVSGYGSADQLPERKAFKDLGFDSLAAVELRNRLGTATGVRLPSTLVFDHPTPLAVAEHLRDRLFAASPAVDIGDRLDELEKALEALSAEDGHDDVGQRLESLLRRWNSRRADAPSTSAISEDASDDELFSMLDQRFGGGEDL</sequence>
<organism>
    <name type="scientific">Saccharopolyspora erythraea</name>
    <name type="common">Streptomyces erythraeus</name>
    <dbReference type="NCBI Taxonomy" id="1836"/>
    <lineage>
        <taxon>Bacteria</taxon>
        <taxon>Bacillati</taxon>
        <taxon>Actinomycetota</taxon>
        <taxon>Actinomycetes</taxon>
        <taxon>Pseudonocardiales</taxon>
        <taxon>Pseudonocardiaceae</taxon>
        <taxon>Saccharopolyspora</taxon>
    </lineage>
</organism>
<protein>
    <recommendedName>
        <fullName evidence="16">Erythronolide synthase EryA2</fullName>
        <ecNumber evidence="13">2.3.1.94</ecNumber>
    </recommendedName>
    <alternativeName>
        <fullName evidence="15">6-deoxyerythronolide B synthase II</fullName>
    </alternativeName>
    <alternativeName>
        <fullName evidence="16">6-deoxyerythronolide-B synthase EryA2, modules 3 and 4</fullName>
        <shortName evidence="15">DEBS 2</shortName>
    </alternativeName>
    <alternativeName>
        <fullName evidence="15">ORF B</fullName>
    </alternativeName>
</protein>
<proteinExistence type="evidence at protein level"/>
<name>ERYA2_SACER</name>
<dbReference type="EC" id="2.3.1.94" evidence="13"/>
<dbReference type="EMBL" id="M63677">
    <property type="protein sequence ID" value="AAA26494.1"/>
    <property type="molecule type" value="Genomic_DNA"/>
</dbReference>
<dbReference type="EMBL" id="X62569">
    <property type="protein sequence ID" value="CAA44448.1"/>
    <property type="molecule type" value="Genomic_DNA"/>
</dbReference>
<dbReference type="PIR" id="S23070">
    <property type="entry name" value="S23070"/>
</dbReference>
<dbReference type="PDB" id="1PZQ">
    <property type="method" value="NMR"/>
    <property type="chains" value="A/B=3490-3547"/>
</dbReference>
<dbReference type="PDB" id="1PZR">
    <property type="method" value="NMR"/>
    <property type="chains" value="A/B=3548-3567"/>
</dbReference>
<dbReference type="PDB" id="2QO3">
    <property type="method" value="X-ray"/>
    <property type="resolution" value="2.59 A"/>
    <property type="chains" value="A/B=27-922"/>
</dbReference>
<dbReference type="PDB" id="3EL6">
    <property type="method" value="X-ray"/>
    <property type="resolution" value="1.85 A"/>
    <property type="chains" value="A=2362-2653"/>
</dbReference>
<dbReference type="PDB" id="6C9U">
    <property type="method" value="X-ray"/>
    <property type="resolution" value="2.09 A"/>
    <property type="chains" value="A=2-922"/>
</dbReference>
<dbReference type="PDB" id="7M7E">
    <property type="method" value="EM"/>
    <property type="resolution" value="3.20 A"/>
    <property type="chains" value="A/B=2-922"/>
</dbReference>
<dbReference type="PDB" id="7S6C">
    <property type="method" value="EM"/>
    <property type="resolution" value="3.10 A"/>
    <property type="chains" value="A/B/C/D=2-30"/>
</dbReference>
<dbReference type="PDB" id="7S6D">
    <property type="method" value="EM"/>
    <property type="resolution" value="3.10 A"/>
    <property type="chains" value="A/B/C=2-30"/>
</dbReference>
<dbReference type="PDB" id="8TJP">
    <property type="method" value="EM"/>
    <property type="resolution" value="3.71 A"/>
    <property type="chains" value="A/B=2-922"/>
</dbReference>
<dbReference type="PDB" id="8TPW">
    <property type="method" value="EM"/>
    <property type="resolution" value="3.46 A"/>
    <property type="chains" value="A/B/C=2-1465"/>
</dbReference>
<dbReference type="PDB" id="8TPX">
    <property type="method" value="EM"/>
    <property type="resolution" value="3.40 A"/>
    <property type="chains" value="A/B/C=2-1465"/>
</dbReference>
<dbReference type="PDBsum" id="1PZQ"/>
<dbReference type="PDBsum" id="1PZR"/>
<dbReference type="PDBsum" id="2QO3"/>
<dbReference type="PDBsum" id="3EL6"/>
<dbReference type="PDBsum" id="6C9U"/>
<dbReference type="PDBsum" id="7M7E"/>
<dbReference type="PDBsum" id="7S6C"/>
<dbReference type="PDBsum" id="7S6D"/>
<dbReference type="PDBsum" id="8TJP"/>
<dbReference type="PDBsum" id="8TPW"/>
<dbReference type="PDBsum" id="8TPX"/>
<dbReference type="BMRB" id="Q03132"/>
<dbReference type="EMDB" id="EMD-24868"/>
<dbReference type="SMR" id="Q03132"/>
<dbReference type="ABCD" id="Q03132">
    <property type="antibodies" value="1 sequenced antibody"/>
</dbReference>
<dbReference type="BioCyc" id="MetaCyc:MONOMER-17078"/>
<dbReference type="BRENDA" id="2.3.1.94">
    <property type="organism ID" value="5518"/>
</dbReference>
<dbReference type="BRENDA" id="2.3.1.B32">
    <property type="organism ID" value="5518"/>
</dbReference>
<dbReference type="UniPathway" id="UPA00240"/>
<dbReference type="EvolutionaryTrace" id="Q03132"/>
<dbReference type="GO" id="GO:0004315">
    <property type="term" value="F:3-oxoacyl-[acyl-carrier-protein] synthase activity"/>
    <property type="evidence" value="ECO:0007669"/>
    <property type="project" value="InterPro"/>
</dbReference>
<dbReference type="GO" id="GO:0047879">
    <property type="term" value="F:erythronolide synthase activity"/>
    <property type="evidence" value="ECO:0000314"/>
    <property type="project" value="UniProtKB"/>
</dbReference>
<dbReference type="GO" id="GO:0004312">
    <property type="term" value="F:fatty acid synthase activity"/>
    <property type="evidence" value="ECO:0007669"/>
    <property type="project" value="TreeGrafter"/>
</dbReference>
<dbReference type="GO" id="GO:0016491">
    <property type="term" value="F:oxidoreductase activity"/>
    <property type="evidence" value="ECO:0007669"/>
    <property type="project" value="InterPro"/>
</dbReference>
<dbReference type="GO" id="GO:0031177">
    <property type="term" value="F:phosphopantetheine binding"/>
    <property type="evidence" value="ECO:0000304"/>
    <property type="project" value="UniProtKB"/>
</dbReference>
<dbReference type="GO" id="GO:0006633">
    <property type="term" value="P:fatty acid biosynthetic process"/>
    <property type="evidence" value="ECO:0007669"/>
    <property type="project" value="InterPro"/>
</dbReference>
<dbReference type="GO" id="GO:0033068">
    <property type="term" value="P:macrolide biosynthetic process"/>
    <property type="evidence" value="ECO:0000315"/>
    <property type="project" value="UniProtKB"/>
</dbReference>
<dbReference type="CDD" id="cd05195">
    <property type="entry name" value="enoyl_red"/>
    <property type="match status" value="1"/>
</dbReference>
<dbReference type="CDD" id="cd08952">
    <property type="entry name" value="KR_1_SDR_x"/>
    <property type="match status" value="1"/>
</dbReference>
<dbReference type="CDD" id="cd08956">
    <property type="entry name" value="KR_3_FAS_SDR_x"/>
    <property type="match status" value="1"/>
</dbReference>
<dbReference type="CDD" id="cd00833">
    <property type="entry name" value="PKS"/>
    <property type="match status" value="2"/>
</dbReference>
<dbReference type="DisProt" id="DP01272"/>
<dbReference type="FunFam" id="3.40.47.10:FF:000019">
    <property type="entry name" value="Polyketide synthase type I"/>
    <property type="match status" value="2"/>
</dbReference>
<dbReference type="FunFam" id="3.40.366.10:FF:000002">
    <property type="entry name" value="Probable polyketide synthase 2"/>
    <property type="match status" value="2"/>
</dbReference>
<dbReference type="FunFam" id="3.90.180.10:FF:000032">
    <property type="entry name" value="Probable polyketide synthase pks1"/>
    <property type="match status" value="1"/>
</dbReference>
<dbReference type="FunFam" id="1.10.1200.10:FF:000007">
    <property type="entry name" value="Probable polyketide synthase pks17"/>
    <property type="match status" value="2"/>
</dbReference>
<dbReference type="Gene3D" id="3.30.70.3290">
    <property type="match status" value="2"/>
</dbReference>
<dbReference type="Gene3D" id="3.40.47.10">
    <property type="match status" value="2"/>
</dbReference>
<dbReference type="Gene3D" id="3.40.50.11460">
    <property type="match status" value="1"/>
</dbReference>
<dbReference type="Gene3D" id="6.10.40.10">
    <property type="match status" value="1"/>
</dbReference>
<dbReference type="Gene3D" id="1.10.1200.10">
    <property type="entry name" value="ACP-like"/>
    <property type="match status" value="2"/>
</dbReference>
<dbReference type="Gene3D" id="1.20.5.1140">
    <property type="entry name" value="Docking domain of the erythromycin polyketide synthase (DEBS)"/>
    <property type="match status" value="1"/>
</dbReference>
<dbReference type="Gene3D" id="3.40.366.10">
    <property type="entry name" value="Malonyl-Coenzyme A Acyl Carrier Protein, domain 2"/>
    <property type="match status" value="2"/>
</dbReference>
<dbReference type="Gene3D" id="3.90.180.10">
    <property type="entry name" value="Medium-chain alcohol dehydrogenases, catalytic domain"/>
    <property type="match status" value="1"/>
</dbReference>
<dbReference type="Gene3D" id="3.40.50.720">
    <property type="entry name" value="NAD(P)-binding Rossmann-like Domain"/>
    <property type="match status" value="2"/>
</dbReference>
<dbReference type="Gene3D" id="3.10.129.110">
    <property type="entry name" value="Polyketide synthase dehydratase"/>
    <property type="match status" value="1"/>
</dbReference>
<dbReference type="InterPro" id="IPR001227">
    <property type="entry name" value="Ac_transferase_dom_sf"/>
</dbReference>
<dbReference type="InterPro" id="IPR036736">
    <property type="entry name" value="ACP-like_sf"/>
</dbReference>
<dbReference type="InterPro" id="IPR014043">
    <property type="entry name" value="Acyl_transferase_dom"/>
</dbReference>
<dbReference type="InterPro" id="IPR016035">
    <property type="entry name" value="Acyl_Trfase/lysoPLipase"/>
</dbReference>
<dbReference type="InterPro" id="IPR013154">
    <property type="entry name" value="ADH-like_N"/>
</dbReference>
<dbReference type="InterPro" id="IPR036347">
    <property type="entry name" value="DEBS_docking_sf"/>
</dbReference>
<dbReference type="InterPro" id="IPR015357">
    <property type="entry name" value="EryA2_docking"/>
</dbReference>
<dbReference type="InterPro" id="IPR011032">
    <property type="entry name" value="GroES-like_sf"/>
</dbReference>
<dbReference type="InterPro" id="IPR018201">
    <property type="entry name" value="Ketoacyl_synth_AS"/>
</dbReference>
<dbReference type="InterPro" id="IPR014031">
    <property type="entry name" value="Ketoacyl_synth_C"/>
</dbReference>
<dbReference type="InterPro" id="IPR014030">
    <property type="entry name" value="Ketoacyl_synth_N"/>
</dbReference>
<dbReference type="InterPro" id="IPR016036">
    <property type="entry name" value="Malonyl_transacylase_ACP-bd"/>
</dbReference>
<dbReference type="InterPro" id="IPR036291">
    <property type="entry name" value="NAD(P)-bd_dom_sf"/>
</dbReference>
<dbReference type="InterPro" id="IPR015083">
    <property type="entry name" value="NorB/c/GfsB-D-like_docking"/>
</dbReference>
<dbReference type="InterPro" id="IPR032821">
    <property type="entry name" value="PKS_assoc"/>
</dbReference>
<dbReference type="InterPro" id="IPR020841">
    <property type="entry name" value="PKS_Beta-ketoAc_synthase_dom"/>
</dbReference>
<dbReference type="InterPro" id="IPR042104">
    <property type="entry name" value="PKS_dehydratase_sf"/>
</dbReference>
<dbReference type="InterPro" id="IPR020807">
    <property type="entry name" value="PKS_DH"/>
</dbReference>
<dbReference type="InterPro" id="IPR049551">
    <property type="entry name" value="PKS_DH_C"/>
</dbReference>
<dbReference type="InterPro" id="IPR049552">
    <property type="entry name" value="PKS_DH_N"/>
</dbReference>
<dbReference type="InterPro" id="IPR020843">
    <property type="entry name" value="PKS_ER"/>
</dbReference>
<dbReference type="InterPro" id="IPR013968">
    <property type="entry name" value="PKS_KR"/>
</dbReference>
<dbReference type="InterPro" id="IPR049900">
    <property type="entry name" value="PKS_mFAS_DH"/>
</dbReference>
<dbReference type="InterPro" id="IPR050091">
    <property type="entry name" value="PKS_NRPS_Biosynth_Enz"/>
</dbReference>
<dbReference type="InterPro" id="IPR020806">
    <property type="entry name" value="PKS_PP-bd"/>
</dbReference>
<dbReference type="InterPro" id="IPR009081">
    <property type="entry name" value="PP-bd_ACP"/>
</dbReference>
<dbReference type="InterPro" id="IPR006162">
    <property type="entry name" value="Ppantetheine_attach_site"/>
</dbReference>
<dbReference type="InterPro" id="IPR055123">
    <property type="entry name" value="SpnB-like_Rossmann"/>
</dbReference>
<dbReference type="InterPro" id="IPR016039">
    <property type="entry name" value="Thiolase-like"/>
</dbReference>
<dbReference type="PANTHER" id="PTHR43775">
    <property type="entry name" value="FATTY ACID SYNTHASE"/>
    <property type="match status" value="1"/>
</dbReference>
<dbReference type="PANTHER" id="PTHR43775:SF51">
    <property type="entry name" value="INACTIVE PHENOLPHTHIOCEROL SYNTHESIS POLYKETIDE SYNTHASE TYPE I PKS1-RELATED"/>
    <property type="match status" value="1"/>
</dbReference>
<dbReference type="Pfam" id="PF00698">
    <property type="entry name" value="Acyl_transf_1"/>
    <property type="match status" value="2"/>
</dbReference>
<dbReference type="Pfam" id="PF08240">
    <property type="entry name" value="ADH_N"/>
    <property type="match status" value="1"/>
</dbReference>
<dbReference type="Pfam" id="PF13602">
    <property type="entry name" value="ADH_zinc_N_2"/>
    <property type="match status" value="1"/>
</dbReference>
<dbReference type="Pfam" id="PF08990">
    <property type="entry name" value="Docking"/>
    <property type="match status" value="1"/>
</dbReference>
<dbReference type="Pfam" id="PF09277">
    <property type="entry name" value="Erythro-docking"/>
    <property type="match status" value="1"/>
</dbReference>
<dbReference type="Pfam" id="PF16197">
    <property type="entry name" value="KAsynt_C_assoc"/>
    <property type="match status" value="2"/>
</dbReference>
<dbReference type="Pfam" id="PF00109">
    <property type="entry name" value="ketoacyl-synt"/>
    <property type="match status" value="2"/>
</dbReference>
<dbReference type="Pfam" id="PF02801">
    <property type="entry name" value="Ketoacyl-synt_C"/>
    <property type="match status" value="2"/>
</dbReference>
<dbReference type="Pfam" id="PF08659">
    <property type="entry name" value="KR"/>
    <property type="match status" value="2"/>
</dbReference>
<dbReference type="Pfam" id="PF21089">
    <property type="entry name" value="PKS_DH_N"/>
    <property type="match status" value="1"/>
</dbReference>
<dbReference type="Pfam" id="PF00550">
    <property type="entry name" value="PP-binding"/>
    <property type="match status" value="2"/>
</dbReference>
<dbReference type="Pfam" id="PF14765">
    <property type="entry name" value="PS-DH"/>
    <property type="match status" value="1"/>
</dbReference>
<dbReference type="Pfam" id="PF22953">
    <property type="entry name" value="SpnB_Rossmann"/>
    <property type="match status" value="1"/>
</dbReference>
<dbReference type="SMART" id="SM00827">
    <property type="entry name" value="PKS_AT"/>
    <property type="match status" value="2"/>
</dbReference>
<dbReference type="SMART" id="SM00826">
    <property type="entry name" value="PKS_DH"/>
    <property type="match status" value="1"/>
</dbReference>
<dbReference type="SMART" id="SM00829">
    <property type="entry name" value="PKS_ER"/>
    <property type="match status" value="1"/>
</dbReference>
<dbReference type="SMART" id="SM00822">
    <property type="entry name" value="PKS_KR"/>
    <property type="match status" value="2"/>
</dbReference>
<dbReference type="SMART" id="SM00825">
    <property type="entry name" value="PKS_KS"/>
    <property type="match status" value="2"/>
</dbReference>
<dbReference type="SMART" id="SM00823">
    <property type="entry name" value="PKS_PP"/>
    <property type="match status" value="2"/>
</dbReference>
<dbReference type="SMART" id="SM01294">
    <property type="entry name" value="PKS_PP_betabranch"/>
    <property type="match status" value="2"/>
</dbReference>
<dbReference type="SUPFAM" id="SSF47336">
    <property type="entry name" value="ACP-like"/>
    <property type="match status" value="2"/>
</dbReference>
<dbReference type="SUPFAM" id="SSF101166">
    <property type="entry name" value="Docking domain A of the erythromycin polyketide synthase (DEBS)"/>
    <property type="match status" value="1"/>
</dbReference>
<dbReference type="SUPFAM" id="SSF52151">
    <property type="entry name" value="FabD/lysophospholipase-like"/>
    <property type="match status" value="2"/>
</dbReference>
<dbReference type="SUPFAM" id="SSF50129">
    <property type="entry name" value="GroES-like"/>
    <property type="match status" value="1"/>
</dbReference>
<dbReference type="SUPFAM" id="SSF51735">
    <property type="entry name" value="NAD(P)-binding Rossmann-fold domains"/>
    <property type="match status" value="5"/>
</dbReference>
<dbReference type="SUPFAM" id="SSF55048">
    <property type="entry name" value="Probable ACP-binding domain of malonyl-CoA ACP transacylase"/>
    <property type="match status" value="2"/>
</dbReference>
<dbReference type="SUPFAM" id="SSF53901">
    <property type="entry name" value="Thiolase-like"/>
    <property type="match status" value="2"/>
</dbReference>
<dbReference type="PROSITE" id="PS50075">
    <property type="entry name" value="CARRIER"/>
    <property type="match status" value="2"/>
</dbReference>
<dbReference type="PROSITE" id="PS00606">
    <property type="entry name" value="KS3_1"/>
    <property type="match status" value="2"/>
</dbReference>
<dbReference type="PROSITE" id="PS52004">
    <property type="entry name" value="KS3_2"/>
    <property type="match status" value="2"/>
</dbReference>
<dbReference type="PROSITE" id="PS00012">
    <property type="entry name" value="PHOSPHOPANTETHEINE"/>
    <property type="match status" value="2"/>
</dbReference>
<dbReference type="PROSITE" id="PS52019">
    <property type="entry name" value="PKS_MFAS_DH"/>
    <property type="match status" value="1"/>
</dbReference>
<feature type="initiator methionine" description="Removed" evidence="9">
    <location>
        <position position="1"/>
    </location>
</feature>
<feature type="chain" id="PRO_0000180294" description="Erythronolide synthase EryA2">
    <location>
        <begin position="2"/>
        <end position="3567"/>
    </location>
</feature>
<feature type="domain" description="Ketosynthase family 3 (KS3) 1" evidence="4">
    <location>
        <begin position="30"/>
        <end position="455"/>
    </location>
</feature>
<feature type="domain" description="Carrier 1" evidence="3">
    <location>
        <begin position="1395"/>
        <end position="1470"/>
    </location>
</feature>
<feature type="domain" description="Ketosynthase family 3 (KS3) 2" evidence="4">
    <location>
        <begin position="1488"/>
        <end position="1912"/>
    </location>
</feature>
<feature type="domain" description="PKS/mFAS DH" evidence="5">
    <location>
        <begin position="2377"/>
        <end position="2648"/>
    </location>
</feature>
<feature type="domain" description="Carrier 2" evidence="3">
    <location>
        <begin position="3413"/>
        <end position="3488"/>
    </location>
</feature>
<feature type="region of interest" description="Module 3" evidence="16">
    <location>
        <begin position="33"/>
        <end position="1467"/>
    </location>
</feature>
<feature type="region of interest" description="Acyltransferase 1" evidence="16">
    <location>
        <begin position="560"/>
        <end position="880"/>
    </location>
</feature>
<feature type="region of interest" description="C2-type beta-ketoacyl reductase 1" evidence="16">
    <location>
        <begin position="1132"/>
        <end position="1297"/>
    </location>
</feature>
<feature type="region of interest" description="Disordered" evidence="7">
    <location>
        <begin position="1364"/>
        <end position="1385"/>
    </location>
</feature>
<feature type="region of interest" description="Module 4" evidence="16">
    <location>
        <begin position="1491"/>
        <end position="3485"/>
    </location>
</feature>
<feature type="region of interest" description="Acyltransferase 2" evidence="16">
    <location>
        <begin position="2015"/>
        <end position="2331"/>
    </location>
</feature>
<feature type="region of interest" description="Dehydratase" evidence="16">
    <location>
        <begin position="2377"/>
        <end position="2645"/>
    </location>
</feature>
<feature type="region of interest" description="N-terminal hotdog fold" evidence="5">
    <location>
        <begin position="2377"/>
        <end position="2502"/>
    </location>
</feature>
<feature type="region of interest" description="C-terminal hotdog fold" evidence="5">
    <location>
        <begin position="2514"/>
        <end position="2648"/>
    </location>
</feature>
<feature type="region of interest" description="Enoyl reductase" evidence="16">
    <location>
        <begin position="2831"/>
        <end position="3131"/>
    </location>
</feature>
<feature type="region of interest" description="Beta-ketoacyl reductase 2" evidence="16">
    <location>
        <begin position="3141"/>
        <end position="3317"/>
    </location>
</feature>
<feature type="active site" description="Acyl-thioester intermediate; for beta-ketoacyl synthase 1 activity" evidence="4 19">
    <location>
        <position position="202"/>
    </location>
</feature>
<feature type="active site" description="For beta-ketoacyl synthase 1 activity" evidence="4">
    <location>
        <position position="337"/>
    </location>
</feature>
<feature type="active site" description="For beta-ketoacyl synthase 1 activity" evidence="4">
    <location>
        <position position="377"/>
    </location>
</feature>
<feature type="active site" description="Acyl-ester intermediate; for acyltransferase 1 activity" evidence="6">
    <location>
        <position position="651"/>
    </location>
</feature>
<feature type="active site" description="For C2-type beta-ketoacyl reductase 1 and probable racemase activity" evidence="2 24">
    <location>
        <position position="1267"/>
    </location>
</feature>
<feature type="active site" description="Acyl-thioester intermediate; for beta-ketoacyl synthase 2 activity" evidence="4">
    <location>
        <position position="1661"/>
    </location>
</feature>
<feature type="active site" description="For beta-ketoacyl synthase 2 activity" evidence="4">
    <location>
        <position position="1796"/>
    </location>
</feature>
<feature type="active site" description="For beta-ketoacyl synthase 2 activity" evidence="4">
    <location>
        <position position="1834"/>
    </location>
</feature>
<feature type="active site" description="Acyl-ester intermediate; for acyltransferase 2 activity" evidence="6">
    <location>
        <position position="2105"/>
    </location>
</feature>
<feature type="active site" description="Proton acceptor; for dehydratase activity" evidence="5 20">
    <location>
        <position position="2409"/>
    </location>
</feature>
<feature type="active site" description="Proton donor; for dehydratase activity" evidence="5 20">
    <location>
        <position position="2571"/>
    </location>
</feature>
<feature type="active site" description="For enoyl reductase activity" evidence="21">
    <location>
        <position position="2874"/>
    </location>
</feature>
<feature type="active site" description="For beta-ketoacyl reductase 2 activity" evidence="16">
    <location>
        <position position="3287"/>
    </location>
</feature>
<feature type="binding site" evidence="21">
    <location>
        <begin position="2964"/>
        <end position="2973"/>
    </location>
    <ligand>
        <name>NADP(+)</name>
        <dbReference type="ChEBI" id="CHEBI:58349"/>
        <label>1</label>
    </ligand>
</feature>
<feature type="binding site" evidence="16">
    <location>
        <begin position="3149"/>
        <end position="3152"/>
    </location>
    <ligand>
        <name>NADP(+)</name>
        <dbReference type="ChEBI" id="CHEBI:58349"/>
        <label>2</label>
    </ligand>
</feature>
<feature type="binding site" evidence="16">
    <location>
        <begin position="3173"/>
        <end position="3176"/>
    </location>
    <ligand>
        <name>NADP(+)</name>
        <dbReference type="ChEBI" id="CHEBI:58349"/>
        <label>2</label>
    </ligand>
</feature>
<feature type="binding site" evidence="16">
    <location>
        <begin position="3202"/>
        <end position="3203"/>
    </location>
    <ligand>
        <name>NADP(+)</name>
        <dbReference type="ChEBI" id="CHEBI:58349"/>
        <label>2</label>
    </ligand>
</feature>
<feature type="binding site" evidence="1">
    <location>
        <position position="3250"/>
    </location>
    <ligand>
        <name>NADP(+)</name>
        <dbReference type="ChEBI" id="CHEBI:58349"/>
        <label>2</label>
    </ligand>
</feature>
<feature type="binding site" evidence="16">
    <location>
        <begin position="3272"/>
        <end position="3273"/>
    </location>
    <ligand>
        <name>NADP(+)</name>
        <dbReference type="ChEBI" id="CHEBI:58349"/>
        <label>2</label>
    </ligand>
</feature>
<feature type="site" description="Important for substrate specificity of the beta-ketoacyl synthase 1" evidence="19">
    <location>
        <position position="155"/>
    </location>
</feature>
<feature type="site" description="Important for substrate specificity of the beta-ketoacyl synthase 1" evidence="19">
    <location>
        <position position="156"/>
    </location>
</feature>
<feature type="modified residue" description="O-(pantetheine 4'-phosphoryl)serine" evidence="3">
    <location>
        <position position="1430"/>
    </location>
</feature>
<feature type="modified residue" description="O-(pantetheine 4'-phosphoryl)serine" evidence="3">
    <location>
        <position position="3448"/>
    </location>
</feature>
<feature type="mutagenesis site" description="Produces tetraketide lactone shunt and also 6-deoxyerythronolide (6-dEB)." evidence="14">
    <original>S</original>
    <variation>F</variation>
    <location>
        <position position="1254"/>
    </location>
</feature>
<feature type="mutagenesis site" description="Produces tetraketide lactone shunt and also 6-deoxyerythronolide (6-dEB)." evidence="14">
    <original>Y</original>
    <variation>F</variation>
    <location>
        <position position="1267"/>
    </location>
</feature>
<feature type="mutagenesis site" description="Decreased production of the erythromycin precursor 6-deoxyerythronolide B (6-dEB)." evidence="11">
    <original>R</original>
    <variation>D</variation>
    <location>
        <position position="2640"/>
    </location>
</feature>
<feature type="mutagenesis site" description="Switches the configuration of the C-2 methyl group of the product." evidence="12">
    <original>Y</original>
    <variation>V</variation>
    <location>
        <position position="2874"/>
    </location>
</feature>
<feature type="sequence conflict" description="In Ref. 2; CAA44448." evidence="16" ref="2">
    <original>R</original>
    <variation>A</variation>
    <location>
        <position position="438"/>
    </location>
</feature>
<feature type="sequence conflict" description="In Ref. 2; CAA44448." evidence="16" ref="2">
    <original>T</original>
    <variation>S</variation>
    <location>
        <position position="480"/>
    </location>
</feature>
<feature type="sequence conflict" description="In Ref. 2; CAA44448." evidence="16" ref="2">
    <original>L</original>
    <variation>F</variation>
    <location>
        <position position="1241"/>
    </location>
</feature>
<feature type="sequence conflict" description="In Ref. 2; CAA44448." evidence="16" ref="2">
    <original>G</original>
    <variation>V</variation>
    <location>
        <position position="2664"/>
    </location>
</feature>
<feature type="helix" evidence="29">
    <location>
        <begin position="3"/>
        <end position="30"/>
    </location>
</feature>
<feature type="strand" evidence="29">
    <location>
        <begin position="33"/>
        <end position="42"/>
    </location>
</feature>
<feature type="helix" evidence="29">
    <location>
        <begin position="43"/>
        <end position="45"/>
    </location>
</feature>
<feature type="helix" evidence="29">
    <location>
        <begin position="49"/>
        <end position="58"/>
    </location>
</feature>
<feature type="strand" evidence="29">
    <location>
        <begin position="68"/>
        <end position="70"/>
    </location>
</feature>
<feature type="helix" evidence="29">
    <location>
        <begin position="74"/>
        <end position="77"/>
    </location>
</feature>
<feature type="strand" evidence="30">
    <location>
        <begin position="80"/>
        <end position="82"/>
    </location>
</feature>
<feature type="strand" evidence="29">
    <location>
        <begin position="92"/>
        <end position="94"/>
    </location>
</feature>
<feature type="turn" evidence="29">
    <location>
        <begin position="97"/>
        <end position="100"/>
    </location>
</feature>
<feature type="turn" evidence="29">
    <location>
        <begin position="104"/>
        <end position="108"/>
    </location>
</feature>
<feature type="helix" evidence="29">
    <location>
        <begin position="111"/>
        <end position="116"/>
    </location>
</feature>
<feature type="helix" evidence="29">
    <location>
        <begin position="119"/>
        <end position="134"/>
    </location>
</feature>
<feature type="helix" evidence="29">
    <location>
        <begin position="139"/>
        <end position="142"/>
    </location>
</feature>
<feature type="strand" evidence="29">
    <location>
        <begin position="147"/>
        <end position="153"/>
    </location>
</feature>
<feature type="turn" evidence="29">
    <location>
        <begin position="158"/>
        <end position="161"/>
    </location>
</feature>
<feature type="helix" evidence="29">
    <location>
        <begin position="171"/>
        <end position="176"/>
    </location>
</feature>
<feature type="helix" evidence="29">
    <location>
        <begin position="178"/>
        <end position="189"/>
    </location>
</feature>
<feature type="strand" evidence="29">
    <location>
        <begin position="195"/>
        <end position="198"/>
    </location>
</feature>
<feature type="helix" evidence="29">
    <location>
        <begin position="201"/>
        <end position="203"/>
    </location>
</feature>
<feature type="helix" evidence="29">
    <location>
        <begin position="204"/>
        <end position="217"/>
    </location>
</feature>
<feature type="strand" evidence="29">
    <location>
        <begin position="222"/>
        <end position="230"/>
    </location>
</feature>
<feature type="strand" evidence="29">
    <location>
        <begin position="233"/>
        <end position="235"/>
    </location>
</feature>
<feature type="helix" evidence="29">
    <location>
        <begin position="236"/>
        <end position="242"/>
    </location>
</feature>
<feature type="turn" evidence="29">
    <location>
        <begin position="243"/>
        <end position="245"/>
    </location>
</feature>
<feature type="strand" evidence="30">
    <location>
        <begin position="249"/>
        <end position="251"/>
    </location>
</feature>
<feature type="strand" evidence="32">
    <location>
        <begin position="255"/>
        <end position="258"/>
    </location>
</feature>
<feature type="strand" evidence="29">
    <location>
        <begin position="268"/>
        <end position="276"/>
    </location>
</feature>
<feature type="helix" evidence="29">
    <location>
        <begin position="277"/>
        <end position="283"/>
    </location>
</feature>
<feature type="strand" evidence="29">
    <location>
        <begin position="289"/>
        <end position="298"/>
    </location>
</feature>
<feature type="strand" evidence="32">
    <location>
        <begin position="303"/>
        <end position="306"/>
    </location>
</feature>
<feature type="helix" evidence="29">
    <location>
        <begin position="310"/>
        <end position="323"/>
    </location>
</feature>
<feature type="helix" evidence="29">
    <location>
        <begin position="328"/>
        <end position="330"/>
    </location>
</feature>
<feature type="strand" evidence="29">
    <location>
        <begin position="333"/>
        <end position="335"/>
    </location>
</feature>
<feature type="helix" evidence="29">
    <location>
        <begin position="344"/>
        <end position="354"/>
    </location>
</feature>
<feature type="strand" evidence="27">
    <location>
        <begin position="357"/>
        <end position="359"/>
    </location>
</feature>
<feature type="strand" evidence="30">
    <location>
        <begin position="362"/>
        <end position="364"/>
    </location>
</feature>
<feature type="strand" evidence="29">
    <location>
        <begin position="366"/>
        <end position="369"/>
    </location>
</feature>
<feature type="helix" evidence="29">
    <location>
        <begin position="372"/>
        <end position="375"/>
    </location>
</feature>
<feature type="helix" evidence="29">
    <location>
        <begin position="379"/>
        <end position="381"/>
    </location>
</feature>
<feature type="helix" evidence="29">
    <location>
        <begin position="382"/>
        <end position="396"/>
    </location>
</feature>
<feature type="strand" evidence="29">
    <location>
        <begin position="406"/>
        <end position="408"/>
    </location>
</feature>
<feature type="strand" evidence="32">
    <location>
        <begin position="410"/>
        <end position="412"/>
    </location>
</feature>
<feature type="helix" evidence="29">
    <location>
        <begin position="414"/>
        <end position="416"/>
    </location>
</feature>
<feature type="strand" evidence="29">
    <location>
        <begin position="418"/>
        <end position="421"/>
    </location>
</feature>
<feature type="strand" evidence="29">
    <location>
        <begin position="431"/>
        <end position="433"/>
    </location>
</feature>
<feature type="strand" evidence="29">
    <location>
        <begin position="436"/>
        <end position="442"/>
    </location>
</feature>
<feature type="strand" evidence="29">
    <location>
        <begin position="446"/>
        <end position="455"/>
    </location>
</feature>
<feature type="strand" evidence="29">
    <location>
        <begin position="472"/>
        <end position="480"/>
    </location>
</feature>
<feature type="helix" evidence="29">
    <location>
        <begin position="481"/>
        <end position="495"/>
    </location>
</feature>
<feature type="strand" evidence="29">
    <location>
        <begin position="497"/>
        <end position="499"/>
    </location>
</feature>
<feature type="helix" evidence="29">
    <location>
        <begin position="502"/>
        <end position="511"/>
    </location>
</feature>
<feature type="strand" evidence="29">
    <location>
        <begin position="517"/>
        <end position="526"/>
    </location>
</feature>
<feature type="helix" evidence="29">
    <location>
        <begin position="527"/>
        <end position="538"/>
    </location>
</feature>
<feature type="strand" evidence="29">
    <location>
        <begin position="547"/>
        <end position="551"/>
    </location>
</feature>
<feature type="strand" evidence="30">
    <location>
        <begin position="553"/>
        <end position="555"/>
    </location>
</feature>
<feature type="strand" evidence="29">
    <location>
        <begin position="559"/>
        <end position="563"/>
    </location>
</feature>
<feature type="turn" evidence="29">
    <location>
        <begin position="571"/>
        <end position="574"/>
    </location>
</feature>
<feature type="helix" evidence="29">
    <location>
        <begin position="575"/>
        <end position="580"/>
    </location>
</feature>
<feature type="helix" evidence="29">
    <location>
        <begin position="582"/>
        <end position="594"/>
    </location>
</feature>
<feature type="helix" evidence="29">
    <location>
        <begin position="596"/>
        <end position="598"/>
    </location>
</feature>
<feature type="helix" evidence="29">
    <location>
        <begin position="603"/>
        <end position="607"/>
    </location>
</feature>
<feature type="helix" evidence="29">
    <location>
        <begin position="619"/>
        <end position="639"/>
    </location>
</feature>
<feature type="strand" evidence="29">
    <location>
        <begin position="645"/>
        <end position="649"/>
    </location>
</feature>
<feature type="helix" evidence="29">
    <location>
        <begin position="653"/>
        <end position="660"/>
    </location>
</feature>
<feature type="helix" evidence="29">
    <location>
        <begin position="666"/>
        <end position="682"/>
    </location>
</feature>
<feature type="turn" evidence="29">
    <location>
        <begin position="683"/>
        <end position="685"/>
    </location>
</feature>
<feature type="strand" evidence="29">
    <location>
        <begin position="688"/>
        <end position="691"/>
    </location>
</feature>
<feature type="helix" evidence="29">
    <location>
        <begin position="696"/>
        <end position="703"/>
    </location>
</feature>
<feature type="helix" evidence="27">
    <location>
        <begin position="704"/>
        <end position="706"/>
    </location>
</feature>
<feature type="strand" evidence="29">
    <location>
        <begin position="717"/>
        <end position="719"/>
    </location>
</feature>
<feature type="strand" evidence="29">
    <location>
        <begin position="721"/>
        <end position="725"/>
    </location>
</feature>
<feature type="helix" evidence="29">
    <location>
        <begin position="727"/>
        <end position="738"/>
    </location>
</feature>
<feature type="strand" evidence="30">
    <location>
        <begin position="740"/>
        <end position="742"/>
    </location>
</feature>
<feature type="strand" evidence="30">
    <location>
        <begin position="745"/>
        <end position="747"/>
    </location>
</feature>
<feature type="strand" evidence="31">
    <location>
        <begin position="753"/>
        <end position="755"/>
    </location>
</feature>
<feature type="helix" evidence="29">
    <location>
        <begin position="756"/>
        <end position="761"/>
    </location>
</feature>
<feature type="helix" evidence="29">
    <location>
        <begin position="762"/>
        <end position="769"/>
    </location>
</feature>
<feature type="strand" evidence="29">
    <location>
        <begin position="778"/>
        <end position="783"/>
    </location>
</feature>
<feature type="turn" evidence="29">
    <location>
        <begin position="784"/>
        <end position="787"/>
    </location>
</feature>
<feature type="strand" evidence="27">
    <location>
        <begin position="788"/>
        <end position="790"/>
    </location>
</feature>
<feature type="helix" evidence="29">
    <location>
        <begin position="792"/>
        <end position="794"/>
    </location>
</feature>
<feature type="helix" evidence="29">
    <location>
        <begin position="797"/>
        <end position="805"/>
    </location>
</feature>
<feature type="helix" evidence="29">
    <location>
        <begin position="810"/>
        <end position="819"/>
    </location>
</feature>
<feature type="strand" evidence="32">
    <location>
        <begin position="820"/>
        <end position="822"/>
    </location>
</feature>
<feature type="strand" evidence="29">
    <location>
        <begin position="824"/>
        <end position="827"/>
    </location>
</feature>
<feature type="strand" evidence="29">
    <location>
        <begin position="829"/>
        <end position="831"/>
    </location>
</feature>
<feature type="helix" evidence="29">
    <location>
        <begin position="835"/>
        <end position="844"/>
    </location>
</feature>
<feature type="strand" evidence="29">
    <location>
        <begin position="845"/>
        <end position="847"/>
    </location>
</feature>
<feature type="strand" evidence="29">
    <location>
        <begin position="852"/>
        <end position="854"/>
    </location>
</feature>
<feature type="strand" evidence="32">
    <location>
        <begin position="859"/>
        <end position="861"/>
    </location>
</feature>
<feature type="helix" evidence="29">
    <location>
        <begin position="864"/>
        <end position="876"/>
    </location>
</feature>
<feature type="helix" evidence="29">
    <location>
        <begin position="883"/>
        <end position="886"/>
    </location>
</feature>
<feature type="helix" evidence="32">
    <location>
        <begin position="1397"/>
        <end position="1409"/>
    </location>
</feature>
<feature type="strand" evidence="32">
    <location>
        <begin position="1412"/>
        <end position="1415"/>
    </location>
</feature>
<feature type="strand" evidence="32">
    <location>
        <begin position="1419"/>
        <end position="1421"/>
    </location>
</feature>
<feature type="helix" evidence="32">
    <location>
        <begin position="1423"/>
        <end position="1426"/>
    </location>
</feature>
<feature type="helix" evidence="32">
    <location>
        <begin position="1432"/>
        <end position="1443"/>
    </location>
</feature>
<feature type="helix" evidence="32">
    <location>
        <begin position="1452"/>
        <end position="1455"/>
    </location>
</feature>
<feature type="helix" evidence="32">
    <location>
        <begin position="1459"/>
        <end position="1461"/>
    </location>
</feature>
<feature type="helix" evidence="28">
    <location>
        <begin position="2368"/>
        <end position="2370"/>
    </location>
</feature>
<feature type="strand" evidence="28">
    <location>
        <begin position="2380"/>
        <end position="2385"/>
    </location>
</feature>
<feature type="turn" evidence="28">
    <location>
        <begin position="2387"/>
        <end position="2389"/>
    </location>
</feature>
<feature type="strand" evidence="28">
    <location>
        <begin position="2392"/>
        <end position="2398"/>
    </location>
</feature>
<feature type="turn" evidence="28">
    <location>
        <begin position="2400"/>
        <end position="2402"/>
    </location>
</feature>
<feature type="helix" evidence="28">
    <location>
        <begin position="2404"/>
        <end position="2408"/>
    </location>
</feature>
<feature type="strand" evidence="28">
    <location>
        <begin position="2409"/>
        <end position="2411"/>
    </location>
</feature>
<feature type="strand" evidence="28">
    <location>
        <begin position="2414"/>
        <end position="2416"/>
    </location>
</feature>
<feature type="helix" evidence="28">
    <location>
        <begin position="2419"/>
        <end position="2433"/>
    </location>
</feature>
<feature type="strand" evidence="28">
    <location>
        <begin position="2437"/>
        <end position="2443"/>
    </location>
</feature>
<feature type="strand" evidence="28">
    <location>
        <begin position="2454"/>
        <end position="2463"/>
    </location>
</feature>
<feature type="strand" evidence="28">
    <location>
        <begin position="2469"/>
        <end position="2477"/>
    </location>
</feature>
<feature type="helix" evidence="28">
    <location>
        <begin position="2482"/>
        <end position="2484"/>
    </location>
</feature>
<feature type="strand" evidence="28">
    <location>
        <begin position="2488"/>
        <end position="2496"/>
    </location>
</feature>
<feature type="helix" evidence="28">
    <location>
        <begin position="2522"/>
        <end position="2528"/>
    </location>
</feature>
<feature type="strand" evidence="28">
    <location>
        <begin position="2531"/>
        <end position="2533"/>
    </location>
</feature>
<feature type="helix" evidence="28">
    <location>
        <begin position="2535"/>
        <end position="2537"/>
    </location>
</feature>
<feature type="strand" evidence="28">
    <location>
        <begin position="2540"/>
        <end position="2546"/>
    </location>
</feature>
<feature type="strand" evidence="28">
    <location>
        <begin position="2549"/>
        <end position="2555"/>
    </location>
</feature>
<feature type="helix" evidence="28">
    <location>
        <begin position="2567"/>
        <end position="2575"/>
    </location>
</feature>
<feature type="helix" evidence="28">
    <location>
        <begin position="2576"/>
        <end position="2579"/>
    </location>
</feature>
<feature type="strand" evidence="28">
    <location>
        <begin position="2590"/>
        <end position="2600"/>
    </location>
</feature>
<feature type="strand" evidence="28">
    <location>
        <begin position="2605"/>
        <end position="2613"/>
    </location>
</feature>
<feature type="strand" evidence="28">
    <location>
        <begin position="2618"/>
        <end position="2624"/>
    </location>
</feature>
<feature type="strand" evidence="28">
    <location>
        <begin position="2630"/>
        <end position="2640"/>
    </location>
</feature>
<feature type="helix" evidence="25">
    <location>
        <begin position="3498"/>
        <end position="3511"/>
    </location>
</feature>
<feature type="helix" evidence="25">
    <location>
        <begin position="3518"/>
        <end position="3536"/>
    </location>
</feature>
<feature type="helix" evidence="26">
    <location>
        <begin position="3550"/>
        <end position="3562"/>
    </location>
</feature>